<feature type="chain" id="PRO_1000052332" description="Large ribosomal subunit protein uL24">
    <location>
        <begin position="1"/>
        <end position="105"/>
    </location>
</feature>
<gene>
    <name evidence="1" type="primary">rplX</name>
    <name type="ordered locus">Tpet_1303</name>
</gene>
<sequence>MRIKKGDLVEVISGKDKGKRGKVLRVIPKENKVIVENVNMVKRHQRPIPQLREGGIIEREAPIYASKVMVVCPACDKRTRVGYRFTEDGKKVRYCKKCGEIIDKD</sequence>
<organism>
    <name type="scientific">Thermotoga petrophila (strain ATCC BAA-488 / DSM 13995 / JCM 10881 / RKU-1)</name>
    <dbReference type="NCBI Taxonomy" id="390874"/>
    <lineage>
        <taxon>Bacteria</taxon>
        <taxon>Thermotogati</taxon>
        <taxon>Thermotogota</taxon>
        <taxon>Thermotogae</taxon>
        <taxon>Thermotogales</taxon>
        <taxon>Thermotogaceae</taxon>
        <taxon>Thermotoga</taxon>
    </lineage>
</organism>
<protein>
    <recommendedName>
        <fullName evidence="1">Large ribosomal subunit protein uL24</fullName>
    </recommendedName>
    <alternativeName>
        <fullName evidence="2">50S ribosomal protein L24</fullName>
    </alternativeName>
</protein>
<evidence type="ECO:0000255" key="1">
    <source>
        <dbReference type="HAMAP-Rule" id="MF_01326"/>
    </source>
</evidence>
<evidence type="ECO:0000305" key="2"/>
<proteinExistence type="inferred from homology"/>
<dbReference type="EMBL" id="CP000702">
    <property type="protein sequence ID" value="ABQ47317.1"/>
    <property type="molecule type" value="Genomic_DNA"/>
</dbReference>
<dbReference type="RefSeq" id="WP_011943791.1">
    <property type="nucleotide sequence ID" value="NC_009486.1"/>
</dbReference>
<dbReference type="SMR" id="A5IM94"/>
<dbReference type="STRING" id="390874.Tpet_1303"/>
<dbReference type="KEGG" id="tpt:Tpet_1303"/>
<dbReference type="eggNOG" id="COG0198">
    <property type="taxonomic scope" value="Bacteria"/>
</dbReference>
<dbReference type="HOGENOM" id="CLU_093315_2_0_0"/>
<dbReference type="Proteomes" id="UP000006558">
    <property type="component" value="Chromosome"/>
</dbReference>
<dbReference type="GO" id="GO:1990904">
    <property type="term" value="C:ribonucleoprotein complex"/>
    <property type="evidence" value="ECO:0007669"/>
    <property type="project" value="UniProtKB-KW"/>
</dbReference>
<dbReference type="GO" id="GO:0005840">
    <property type="term" value="C:ribosome"/>
    <property type="evidence" value="ECO:0007669"/>
    <property type="project" value="UniProtKB-KW"/>
</dbReference>
<dbReference type="GO" id="GO:0019843">
    <property type="term" value="F:rRNA binding"/>
    <property type="evidence" value="ECO:0007669"/>
    <property type="project" value="UniProtKB-UniRule"/>
</dbReference>
<dbReference type="GO" id="GO:0003735">
    <property type="term" value="F:structural constituent of ribosome"/>
    <property type="evidence" value="ECO:0007669"/>
    <property type="project" value="InterPro"/>
</dbReference>
<dbReference type="GO" id="GO:0006412">
    <property type="term" value="P:translation"/>
    <property type="evidence" value="ECO:0007669"/>
    <property type="project" value="UniProtKB-UniRule"/>
</dbReference>
<dbReference type="CDD" id="cd06089">
    <property type="entry name" value="KOW_RPL26"/>
    <property type="match status" value="1"/>
</dbReference>
<dbReference type="FunFam" id="2.30.30.30:FF:000004">
    <property type="entry name" value="50S ribosomal protein L24"/>
    <property type="match status" value="1"/>
</dbReference>
<dbReference type="Gene3D" id="2.30.30.30">
    <property type="match status" value="1"/>
</dbReference>
<dbReference type="HAMAP" id="MF_01326_B">
    <property type="entry name" value="Ribosomal_uL24_B"/>
    <property type="match status" value="1"/>
</dbReference>
<dbReference type="InterPro" id="IPR005824">
    <property type="entry name" value="KOW"/>
</dbReference>
<dbReference type="InterPro" id="IPR014722">
    <property type="entry name" value="Rib_uL2_dom2"/>
</dbReference>
<dbReference type="InterPro" id="IPR003256">
    <property type="entry name" value="Ribosomal_uL24"/>
</dbReference>
<dbReference type="InterPro" id="IPR005825">
    <property type="entry name" value="Ribosomal_uL24_CS"/>
</dbReference>
<dbReference type="InterPro" id="IPR041988">
    <property type="entry name" value="Ribosomal_uL24_KOW"/>
</dbReference>
<dbReference type="InterPro" id="IPR008991">
    <property type="entry name" value="Translation_prot_SH3-like_sf"/>
</dbReference>
<dbReference type="NCBIfam" id="TIGR01079">
    <property type="entry name" value="rplX_bact"/>
    <property type="match status" value="1"/>
</dbReference>
<dbReference type="PANTHER" id="PTHR12903">
    <property type="entry name" value="MITOCHONDRIAL RIBOSOMAL PROTEIN L24"/>
    <property type="match status" value="1"/>
</dbReference>
<dbReference type="Pfam" id="PF00467">
    <property type="entry name" value="KOW"/>
    <property type="match status" value="1"/>
</dbReference>
<dbReference type="Pfam" id="PF17136">
    <property type="entry name" value="ribosomal_L24"/>
    <property type="match status" value="1"/>
</dbReference>
<dbReference type="SMART" id="SM00739">
    <property type="entry name" value="KOW"/>
    <property type="match status" value="1"/>
</dbReference>
<dbReference type="SUPFAM" id="SSF50104">
    <property type="entry name" value="Translation proteins SH3-like domain"/>
    <property type="match status" value="1"/>
</dbReference>
<dbReference type="PROSITE" id="PS01108">
    <property type="entry name" value="RIBOSOMAL_L24"/>
    <property type="match status" value="1"/>
</dbReference>
<accession>A5IM94</accession>
<keyword id="KW-0687">Ribonucleoprotein</keyword>
<keyword id="KW-0689">Ribosomal protein</keyword>
<keyword id="KW-0694">RNA-binding</keyword>
<keyword id="KW-0699">rRNA-binding</keyword>
<name>RL24_THEP1</name>
<reference key="1">
    <citation type="submission" date="2007-05" db="EMBL/GenBank/DDBJ databases">
        <title>Complete sequence of Thermotoga petrophila RKU-1.</title>
        <authorList>
            <consortium name="US DOE Joint Genome Institute"/>
            <person name="Copeland A."/>
            <person name="Lucas S."/>
            <person name="Lapidus A."/>
            <person name="Barry K."/>
            <person name="Glavina del Rio T."/>
            <person name="Dalin E."/>
            <person name="Tice H."/>
            <person name="Pitluck S."/>
            <person name="Sims D."/>
            <person name="Brettin T."/>
            <person name="Bruce D."/>
            <person name="Detter J.C."/>
            <person name="Han C."/>
            <person name="Tapia R."/>
            <person name="Schmutz J."/>
            <person name="Larimer F."/>
            <person name="Land M."/>
            <person name="Hauser L."/>
            <person name="Kyrpides N."/>
            <person name="Mikhailova N."/>
            <person name="Nelson K."/>
            <person name="Gogarten J.P."/>
            <person name="Noll K."/>
            <person name="Richardson P."/>
        </authorList>
    </citation>
    <scope>NUCLEOTIDE SEQUENCE [LARGE SCALE GENOMIC DNA]</scope>
    <source>
        <strain>ATCC BAA-488 / DSM 13995 / JCM 10881 / RKU-1</strain>
    </source>
</reference>
<comment type="function">
    <text evidence="1">One of two assembly initiator proteins, it binds directly to the 5'-end of the 23S rRNA, where it nucleates assembly of the 50S subunit.</text>
</comment>
<comment type="function">
    <text evidence="1">One of the proteins that surrounds the polypeptide exit tunnel on the outside of the subunit.</text>
</comment>
<comment type="subunit">
    <text evidence="1">Part of the 50S ribosomal subunit.</text>
</comment>
<comment type="similarity">
    <text evidence="1">Belongs to the universal ribosomal protein uL24 family.</text>
</comment>